<accession>Q2U664</accession>
<name>CAF17_ASPOR</name>
<feature type="transit peptide" description="Mitochondrion" evidence="2">
    <location>
        <begin position="1"/>
        <end position="28"/>
    </location>
</feature>
<feature type="chain" id="PRO_0000301693" description="Iron-sulfur cluster assembly factor IBA57 homolog, mitochondrial">
    <location>
        <begin position="29"/>
        <end position="447"/>
    </location>
</feature>
<feature type="region of interest" description="Disordered" evidence="3">
    <location>
        <begin position="24"/>
        <end position="44"/>
    </location>
</feature>
<feature type="region of interest" description="Disordered" evidence="3">
    <location>
        <begin position="417"/>
        <end position="447"/>
    </location>
</feature>
<feature type="compositionally biased region" description="Polar residues" evidence="3">
    <location>
        <begin position="24"/>
        <end position="36"/>
    </location>
</feature>
<feature type="compositionally biased region" description="Basic and acidic residues" evidence="3">
    <location>
        <begin position="421"/>
        <end position="434"/>
    </location>
</feature>
<sequence>MRPSTSVRTICANCSNHTRLFSTTVRSRSQQKSDATPASPPQAGYARLTNRGLISITGVDSTTFLQGLITQNMLITNDQNRATRQTGSYTAFLNSQGRVLNDAFLYPLPQADLTSPDEPAWLIEVDRNEVASLMKHLKKHKLRAKLKLRALEDGERTVWASWKDHEQPRWAAYNLESPSSSPFSPSSSIAGCIDTRAPGFGSRIITPGAEDLRTHVPDETQIAGSEVSLGAYTVRRMLHGIAEGQSEIIRESALPLECNMDMMKGIDFRKGCYVGQELTIRTHHTGVVRKRILPVQLYTGDQDALESAGAPVYDPTAELPLPPSAANMYKISARRARSTGKFLGGVGNIGLALCRLEMMTDVTLTGERTQYSPEQEFKVSWDAAEEGSSEHQEPGEVKVKAFVPSWTRDFILNGGVKKNTRGREAEGHRAREFLEQLEEEESLRQKE</sequence>
<evidence type="ECO:0000250" key="1">
    <source>
        <dbReference type="UniProtKB" id="P47158"/>
    </source>
</evidence>
<evidence type="ECO:0000255" key="2"/>
<evidence type="ECO:0000256" key="3">
    <source>
        <dbReference type="SAM" id="MobiDB-lite"/>
    </source>
</evidence>
<evidence type="ECO:0000305" key="4"/>
<gene>
    <name type="primary">caf17</name>
    <name type="ORF">AO090120000364</name>
</gene>
<organism>
    <name type="scientific">Aspergillus oryzae (strain ATCC 42149 / RIB 40)</name>
    <name type="common">Yellow koji mold</name>
    <dbReference type="NCBI Taxonomy" id="510516"/>
    <lineage>
        <taxon>Eukaryota</taxon>
        <taxon>Fungi</taxon>
        <taxon>Dikarya</taxon>
        <taxon>Ascomycota</taxon>
        <taxon>Pezizomycotina</taxon>
        <taxon>Eurotiomycetes</taxon>
        <taxon>Eurotiomycetidae</taxon>
        <taxon>Eurotiales</taxon>
        <taxon>Aspergillaceae</taxon>
        <taxon>Aspergillus</taxon>
        <taxon>Aspergillus subgen. Circumdati</taxon>
    </lineage>
</organism>
<keyword id="KW-0496">Mitochondrion</keyword>
<keyword id="KW-1185">Reference proteome</keyword>
<keyword id="KW-0809">Transit peptide</keyword>
<protein>
    <recommendedName>
        <fullName>Iron-sulfur cluster assembly factor IBA57 homolog, mitochondrial</fullName>
    </recommendedName>
</protein>
<comment type="subcellular location">
    <subcellularLocation>
        <location evidence="1">Mitochondrion matrix</location>
    </subcellularLocation>
</comment>
<comment type="similarity">
    <text evidence="4">Belongs to the GcvT family. CAF17/IBA57 subfamily.</text>
</comment>
<dbReference type="EMBL" id="BA000053">
    <property type="protein sequence ID" value="BAE62951.1"/>
    <property type="molecule type" value="Genomic_DNA"/>
</dbReference>
<dbReference type="SMR" id="Q2U664"/>
<dbReference type="STRING" id="510516.Q2U664"/>
<dbReference type="EnsemblFungi" id="BAE62951">
    <property type="protein sequence ID" value="BAE62951"/>
    <property type="gene ID" value="AO090120000364"/>
</dbReference>
<dbReference type="HOGENOM" id="CLU_007884_7_0_1"/>
<dbReference type="OMA" id="NMLVAND"/>
<dbReference type="Proteomes" id="UP000006564">
    <property type="component" value="Chromosome 5"/>
</dbReference>
<dbReference type="GO" id="GO:0005759">
    <property type="term" value="C:mitochondrial matrix"/>
    <property type="evidence" value="ECO:0007669"/>
    <property type="project" value="TreeGrafter"/>
</dbReference>
<dbReference type="GO" id="GO:0016740">
    <property type="term" value="F:transferase activity"/>
    <property type="evidence" value="ECO:0007669"/>
    <property type="project" value="UniProtKB-KW"/>
</dbReference>
<dbReference type="GO" id="GO:0016226">
    <property type="term" value="P:iron-sulfur cluster assembly"/>
    <property type="evidence" value="ECO:0007669"/>
    <property type="project" value="TreeGrafter"/>
</dbReference>
<dbReference type="FunFam" id="3.30.1360.120:FF:000028">
    <property type="entry name" value="Putative transferase caf17, mitochondrial"/>
    <property type="match status" value="1"/>
</dbReference>
<dbReference type="Gene3D" id="3.30.1360.120">
    <property type="entry name" value="Probable tRNA modification gtpase trme, domain 1"/>
    <property type="match status" value="1"/>
</dbReference>
<dbReference type="InterPro" id="IPR027266">
    <property type="entry name" value="TrmE/GcvT_dom1"/>
</dbReference>
<dbReference type="InterPro" id="IPR045179">
    <property type="entry name" value="YgfZ/GcvT"/>
</dbReference>
<dbReference type="InterPro" id="IPR017703">
    <property type="entry name" value="YgfZ/GcvT_CS"/>
</dbReference>
<dbReference type="NCBIfam" id="TIGR03317">
    <property type="entry name" value="ygfZ_signature"/>
    <property type="match status" value="1"/>
</dbReference>
<dbReference type="PANTHER" id="PTHR22602">
    <property type="entry name" value="TRANSFERASE CAF17, MITOCHONDRIAL-RELATED"/>
    <property type="match status" value="1"/>
</dbReference>
<dbReference type="PANTHER" id="PTHR22602:SF0">
    <property type="entry name" value="TRANSFERASE CAF17, MITOCHONDRIAL-RELATED"/>
    <property type="match status" value="1"/>
</dbReference>
<dbReference type="Pfam" id="PF25455">
    <property type="entry name" value="Beta-barrel_CAF17_C"/>
    <property type="match status" value="1"/>
</dbReference>
<dbReference type="SUPFAM" id="SSF103025">
    <property type="entry name" value="Folate-binding domain"/>
    <property type="match status" value="1"/>
</dbReference>
<proteinExistence type="inferred from homology"/>
<reference key="1">
    <citation type="journal article" date="2005" name="Nature">
        <title>Genome sequencing and analysis of Aspergillus oryzae.</title>
        <authorList>
            <person name="Machida M."/>
            <person name="Asai K."/>
            <person name="Sano M."/>
            <person name="Tanaka T."/>
            <person name="Kumagai T."/>
            <person name="Terai G."/>
            <person name="Kusumoto K."/>
            <person name="Arima T."/>
            <person name="Akita O."/>
            <person name="Kashiwagi Y."/>
            <person name="Abe K."/>
            <person name="Gomi K."/>
            <person name="Horiuchi H."/>
            <person name="Kitamoto K."/>
            <person name="Kobayashi T."/>
            <person name="Takeuchi M."/>
            <person name="Denning D.W."/>
            <person name="Galagan J.E."/>
            <person name="Nierman W.C."/>
            <person name="Yu J."/>
            <person name="Archer D.B."/>
            <person name="Bennett J.W."/>
            <person name="Bhatnagar D."/>
            <person name="Cleveland T.E."/>
            <person name="Fedorova N.D."/>
            <person name="Gotoh O."/>
            <person name="Horikawa H."/>
            <person name="Hosoyama A."/>
            <person name="Ichinomiya M."/>
            <person name="Igarashi R."/>
            <person name="Iwashita K."/>
            <person name="Juvvadi P.R."/>
            <person name="Kato M."/>
            <person name="Kato Y."/>
            <person name="Kin T."/>
            <person name="Kokubun A."/>
            <person name="Maeda H."/>
            <person name="Maeyama N."/>
            <person name="Maruyama J."/>
            <person name="Nagasaki H."/>
            <person name="Nakajima T."/>
            <person name="Oda K."/>
            <person name="Okada K."/>
            <person name="Paulsen I."/>
            <person name="Sakamoto K."/>
            <person name="Sawano T."/>
            <person name="Takahashi M."/>
            <person name="Takase K."/>
            <person name="Terabayashi Y."/>
            <person name="Wortman J.R."/>
            <person name="Yamada O."/>
            <person name="Yamagata Y."/>
            <person name="Anazawa H."/>
            <person name="Hata Y."/>
            <person name="Koide Y."/>
            <person name="Komori T."/>
            <person name="Koyama Y."/>
            <person name="Minetoki T."/>
            <person name="Suharnan S."/>
            <person name="Tanaka A."/>
            <person name="Isono K."/>
            <person name="Kuhara S."/>
            <person name="Ogasawara N."/>
            <person name="Kikuchi H."/>
        </authorList>
    </citation>
    <scope>NUCLEOTIDE SEQUENCE [LARGE SCALE GENOMIC DNA]</scope>
    <source>
        <strain>ATCC 42149 / RIB 40</strain>
    </source>
</reference>